<name>SYH_THEVO</name>
<sequence length="426" mass="47612">MQIERIKGFRDFYPEDMEIEKFIFETASSVAESYGFKRIDFPSLEYIDLYRIKSGEELLNQTYSFTDRGGREVTLIPEATPSTVRMLTSRKDIAKPVRWYSFPKVWRYEEPQAGRFREHYQFNADIFGPSNEEADAEIISLASGILDGLGLSGAYEIRVNSRIMMEDILNGMGIADPYTVFSIVDRFHKVSKETFVDDLMSVGLSEENSNTIYRMCSEASEPGGISGLFGSGKVSKAAERLIRTIDILKEYGVKSVKYDFSIVRGLSYYTGLVFEAYDKSGQFRAILGGGRYDNLAKLFSEQDIPAVGFGMGDAVISLLLKSKGVKAPHAKKSVYVCRVGTVKAERIASISKMLRSSGFIVSAEIMDRSLSSQLKYASYEGCEYAVIAGERDLENNSVTVRDLSTGEQEIVTLGDLVPFLEKSTSY</sequence>
<evidence type="ECO:0000305" key="1"/>
<proteinExistence type="inferred from homology"/>
<dbReference type="EC" id="6.1.1.21"/>
<dbReference type="EMBL" id="BA000011">
    <property type="protein sequence ID" value="BAB59297.1"/>
    <property type="molecule type" value="Genomic_DNA"/>
</dbReference>
<dbReference type="RefSeq" id="WP_010916410.1">
    <property type="nucleotide sequence ID" value="NC_002689.2"/>
</dbReference>
<dbReference type="SMR" id="Q97CE6"/>
<dbReference type="STRING" id="273116.gene:9380925"/>
<dbReference type="PaxDb" id="273116-14324369"/>
<dbReference type="GeneID" id="1441640"/>
<dbReference type="KEGG" id="tvo:TVG0164058"/>
<dbReference type="eggNOG" id="arCOG00404">
    <property type="taxonomic scope" value="Archaea"/>
</dbReference>
<dbReference type="HOGENOM" id="CLU_025113_3_1_2"/>
<dbReference type="OrthoDB" id="8659at2157"/>
<dbReference type="PhylomeDB" id="Q97CE6"/>
<dbReference type="Proteomes" id="UP000001017">
    <property type="component" value="Chromosome"/>
</dbReference>
<dbReference type="GO" id="GO:0005737">
    <property type="term" value="C:cytoplasm"/>
    <property type="evidence" value="ECO:0007669"/>
    <property type="project" value="UniProtKB-SubCell"/>
</dbReference>
<dbReference type="GO" id="GO:0005524">
    <property type="term" value="F:ATP binding"/>
    <property type="evidence" value="ECO:0007669"/>
    <property type="project" value="UniProtKB-UniRule"/>
</dbReference>
<dbReference type="GO" id="GO:0004821">
    <property type="term" value="F:histidine-tRNA ligase activity"/>
    <property type="evidence" value="ECO:0007669"/>
    <property type="project" value="UniProtKB-UniRule"/>
</dbReference>
<dbReference type="GO" id="GO:0006427">
    <property type="term" value="P:histidyl-tRNA aminoacylation"/>
    <property type="evidence" value="ECO:0007669"/>
    <property type="project" value="UniProtKB-UniRule"/>
</dbReference>
<dbReference type="CDD" id="cd00773">
    <property type="entry name" value="HisRS-like_core"/>
    <property type="match status" value="1"/>
</dbReference>
<dbReference type="CDD" id="cd00859">
    <property type="entry name" value="HisRS_anticodon"/>
    <property type="match status" value="1"/>
</dbReference>
<dbReference type="Gene3D" id="3.40.50.800">
    <property type="entry name" value="Anticodon-binding domain"/>
    <property type="match status" value="1"/>
</dbReference>
<dbReference type="Gene3D" id="3.30.930.10">
    <property type="entry name" value="Bira Bifunctional Protein, Domain 2"/>
    <property type="match status" value="1"/>
</dbReference>
<dbReference type="HAMAP" id="MF_00127">
    <property type="entry name" value="His_tRNA_synth"/>
    <property type="match status" value="1"/>
</dbReference>
<dbReference type="InterPro" id="IPR006195">
    <property type="entry name" value="aa-tRNA-synth_II"/>
</dbReference>
<dbReference type="InterPro" id="IPR045864">
    <property type="entry name" value="aa-tRNA-synth_II/BPL/LPL"/>
</dbReference>
<dbReference type="InterPro" id="IPR004154">
    <property type="entry name" value="Anticodon-bd"/>
</dbReference>
<dbReference type="InterPro" id="IPR036621">
    <property type="entry name" value="Anticodon-bd_dom_sf"/>
</dbReference>
<dbReference type="InterPro" id="IPR015807">
    <property type="entry name" value="His-tRNA-ligase"/>
</dbReference>
<dbReference type="InterPro" id="IPR041715">
    <property type="entry name" value="HisRS-like_core"/>
</dbReference>
<dbReference type="InterPro" id="IPR004516">
    <property type="entry name" value="HisRS/HisZ"/>
</dbReference>
<dbReference type="InterPro" id="IPR033656">
    <property type="entry name" value="HisRS_anticodon"/>
</dbReference>
<dbReference type="NCBIfam" id="TIGR00442">
    <property type="entry name" value="hisS"/>
    <property type="match status" value="1"/>
</dbReference>
<dbReference type="PANTHER" id="PTHR43707:SF1">
    <property type="entry name" value="HISTIDINE--TRNA LIGASE, MITOCHONDRIAL-RELATED"/>
    <property type="match status" value="1"/>
</dbReference>
<dbReference type="PANTHER" id="PTHR43707">
    <property type="entry name" value="HISTIDYL-TRNA SYNTHETASE"/>
    <property type="match status" value="1"/>
</dbReference>
<dbReference type="Pfam" id="PF03129">
    <property type="entry name" value="HGTP_anticodon"/>
    <property type="match status" value="1"/>
</dbReference>
<dbReference type="Pfam" id="PF13393">
    <property type="entry name" value="tRNA-synt_His"/>
    <property type="match status" value="1"/>
</dbReference>
<dbReference type="PIRSF" id="PIRSF001549">
    <property type="entry name" value="His-tRNA_synth"/>
    <property type="match status" value="1"/>
</dbReference>
<dbReference type="SUPFAM" id="SSF52954">
    <property type="entry name" value="Class II aaRS ABD-related"/>
    <property type="match status" value="1"/>
</dbReference>
<dbReference type="SUPFAM" id="SSF55681">
    <property type="entry name" value="Class II aaRS and biotin synthetases"/>
    <property type="match status" value="1"/>
</dbReference>
<dbReference type="PROSITE" id="PS50862">
    <property type="entry name" value="AA_TRNA_LIGASE_II"/>
    <property type="match status" value="1"/>
</dbReference>
<gene>
    <name type="primary">hisS</name>
    <name type="ordered locus">TV0155</name>
    <name type="ORF">TVG0164058</name>
</gene>
<feature type="chain" id="PRO_0000136329" description="Histidine--tRNA ligase">
    <location>
        <begin position="1"/>
        <end position="426"/>
    </location>
</feature>
<protein>
    <recommendedName>
        <fullName>Histidine--tRNA ligase</fullName>
        <ecNumber>6.1.1.21</ecNumber>
    </recommendedName>
    <alternativeName>
        <fullName>Histidyl-tRNA synthetase</fullName>
        <shortName>HisRS</shortName>
    </alternativeName>
</protein>
<keyword id="KW-0030">Aminoacyl-tRNA synthetase</keyword>
<keyword id="KW-0067">ATP-binding</keyword>
<keyword id="KW-0963">Cytoplasm</keyword>
<keyword id="KW-0436">Ligase</keyword>
<keyword id="KW-0547">Nucleotide-binding</keyword>
<keyword id="KW-0648">Protein biosynthesis</keyword>
<comment type="catalytic activity">
    <reaction>
        <text>tRNA(His) + L-histidine + ATP = L-histidyl-tRNA(His) + AMP + diphosphate + H(+)</text>
        <dbReference type="Rhea" id="RHEA:17313"/>
        <dbReference type="Rhea" id="RHEA-COMP:9665"/>
        <dbReference type="Rhea" id="RHEA-COMP:9689"/>
        <dbReference type="ChEBI" id="CHEBI:15378"/>
        <dbReference type="ChEBI" id="CHEBI:30616"/>
        <dbReference type="ChEBI" id="CHEBI:33019"/>
        <dbReference type="ChEBI" id="CHEBI:57595"/>
        <dbReference type="ChEBI" id="CHEBI:78442"/>
        <dbReference type="ChEBI" id="CHEBI:78527"/>
        <dbReference type="ChEBI" id="CHEBI:456215"/>
        <dbReference type="EC" id="6.1.1.21"/>
    </reaction>
</comment>
<comment type="subcellular location">
    <subcellularLocation>
        <location>Cytoplasm</location>
    </subcellularLocation>
</comment>
<comment type="similarity">
    <text evidence="1">Belongs to the class-II aminoacyl-tRNA synthetase family.</text>
</comment>
<organism>
    <name type="scientific">Thermoplasma volcanium (strain ATCC 51530 / DSM 4299 / JCM 9571 / NBRC 15438 / GSS1)</name>
    <dbReference type="NCBI Taxonomy" id="273116"/>
    <lineage>
        <taxon>Archaea</taxon>
        <taxon>Methanobacteriati</taxon>
        <taxon>Thermoplasmatota</taxon>
        <taxon>Thermoplasmata</taxon>
        <taxon>Thermoplasmatales</taxon>
        <taxon>Thermoplasmataceae</taxon>
        <taxon>Thermoplasma</taxon>
    </lineage>
</organism>
<reference key="1">
    <citation type="journal article" date="2000" name="Proc. Natl. Acad. Sci. U.S.A.">
        <title>Archaeal adaptation to higher temperatures revealed by genomic sequence of Thermoplasma volcanium.</title>
        <authorList>
            <person name="Kawashima T."/>
            <person name="Amano N."/>
            <person name="Koike H."/>
            <person name="Makino S."/>
            <person name="Higuchi S."/>
            <person name="Kawashima-Ohya Y."/>
            <person name="Watanabe K."/>
            <person name="Yamazaki M."/>
            <person name="Kanehori K."/>
            <person name="Kawamoto T."/>
            <person name="Nunoshiba T."/>
            <person name="Yamamoto Y."/>
            <person name="Aramaki H."/>
            <person name="Makino K."/>
            <person name="Suzuki M."/>
        </authorList>
    </citation>
    <scope>NUCLEOTIDE SEQUENCE [LARGE SCALE GENOMIC DNA]</scope>
    <source>
        <strain>ATCC 51530 / DSM 4299 / JCM 9571 / NBRC 15438 / GSS1</strain>
    </source>
</reference>
<accession>Q97CE6</accession>